<keyword id="KW-0903">Direct protein sequencing</keyword>
<keyword id="KW-1185">Reference proteome</keyword>
<feature type="chain" id="PRO_0000055522" description="Unknown protein from spot 907 of 2D-PAGE of etiolated coleoptile">
    <location>
        <begin position="1" status="less than"/>
        <end position="8" status="greater than"/>
    </location>
</feature>
<feature type="non-terminal residue">
    <location>
        <position position="1"/>
    </location>
</feature>
<feature type="non-terminal residue">
    <location>
        <position position="8"/>
    </location>
</feature>
<reference key="1">
    <citation type="journal article" date="1996" name="Theor. Appl. Genet.">
        <title>The maize two dimensional gel protein database: towards an integrated genome analysis program.</title>
        <authorList>
            <person name="Touzet P."/>
            <person name="Riccardi F."/>
            <person name="Morin C."/>
            <person name="Damerval C."/>
            <person name="Huet J.-C."/>
            <person name="Pernollet J.-C."/>
            <person name="Zivy M."/>
            <person name="de Vienne D."/>
        </authorList>
        <dbReference type="AGRICOLA" id="IND20551642"/>
    </citation>
    <scope>PROTEIN SEQUENCE</scope>
    <source>
        <tissue>Coleoptile</tissue>
    </source>
</reference>
<name>UC26_MAIZE</name>
<comment type="miscellaneous">
    <text>On the 2D-gel the determined pI of this unknown protein is: 7.0, its MW is: 57.2 kDa.</text>
</comment>
<protein>
    <recommendedName>
        <fullName>Unknown protein from spot 907 of 2D-PAGE of etiolated coleoptile</fullName>
    </recommendedName>
</protein>
<sequence length="8" mass="990">AEPRDQFK</sequence>
<accession>P80632</accession>
<dbReference type="InParanoid" id="P80632"/>
<dbReference type="Proteomes" id="UP000007305">
    <property type="component" value="Unplaced"/>
</dbReference>
<organism>
    <name type="scientific">Zea mays</name>
    <name type="common">Maize</name>
    <dbReference type="NCBI Taxonomy" id="4577"/>
    <lineage>
        <taxon>Eukaryota</taxon>
        <taxon>Viridiplantae</taxon>
        <taxon>Streptophyta</taxon>
        <taxon>Embryophyta</taxon>
        <taxon>Tracheophyta</taxon>
        <taxon>Spermatophyta</taxon>
        <taxon>Magnoliopsida</taxon>
        <taxon>Liliopsida</taxon>
        <taxon>Poales</taxon>
        <taxon>Poaceae</taxon>
        <taxon>PACMAD clade</taxon>
        <taxon>Panicoideae</taxon>
        <taxon>Andropogonodae</taxon>
        <taxon>Andropogoneae</taxon>
        <taxon>Tripsacinae</taxon>
        <taxon>Zea</taxon>
    </lineage>
</organism>
<proteinExistence type="evidence at protein level"/>